<feature type="chain" id="PRO_1000069659" description="Thymidine phosphorylase">
    <location>
        <begin position="1"/>
        <end position="440"/>
    </location>
</feature>
<comment type="function">
    <text evidence="1">The enzymes which catalyze the reversible phosphorolysis of pyrimidine nucleosides are involved in the degradation of these compounds and in their utilization as carbon and energy sources, or in the rescue of pyrimidine bases for nucleotide synthesis.</text>
</comment>
<comment type="catalytic activity">
    <reaction evidence="1">
        <text>thymidine + phosphate = 2-deoxy-alpha-D-ribose 1-phosphate + thymine</text>
        <dbReference type="Rhea" id="RHEA:16037"/>
        <dbReference type="ChEBI" id="CHEBI:17748"/>
        <dbReference type="ChEBI" id="CHEBI:17821"/>
        <dbReference type="ChEBI" id="CHEBI:43474"/>
        <dbReference type="ChEBI" id="CHEBI:57259"/>
        <dbReference type="EC" id="2.4.2.4"/>
    </reaction>
</comment>
<comment type="pathway">
    <text evidence="1">Pyrimidine metabolism; dTMP biosynthesis via salvage pathway; dTMP from thymine: step 1/2.</text>
</comment>
<comment type="subunit">
    <text evidence="1">Homodimer.</text>
</comment>
<comment type="similarity">
    <text evidence="1">Belongs to the thymidine/pyrimidine-nucleoside phosphorylase family.</text>
</comment>
<proteinExistence type="inferred from homology"/>
<protein>
    <recommendedName>
        <fullName evidence="1">Thymidine phosphorylase</fullName>
        <ecNumber evidence="1">2.4.2.4</ecNumber>
    </recommendedName>
    <alternativeName>
        <fullName evidence="1">TdRPase</fullName>
    </alternativeName>
</protein>
<organism>
    <name type="scientific">Escherichia coli O139:H28 (strain E24377A / ETEC)</name>
    <dbReference type="NCBI Taxonomy" id="331111"/>
    <lineage>
        <taxon>Bacteria</taxon>
        <taxon>Pseudomonadati</taxon>
        <taxon>Pseudomonadota</taxon>
        <taxon>Gammaproteobacteria</taxon>
        <taxon>Enterobacterales</taxon>
        <taxon>Enterobacteriaceae</taxon>
        <taxon>Escherichia</taxon>
    </lineage>
</organism>
<accession>A7ZVS5</accession>
<name>TYPH_ECO24</name>
<evidence type="ECO:0000255" key="1">
    <source>
        <dbReference type="HAMAP-Rule" id="MF_01628"/>
    </source>
</evidence>
<keyword id="KW-0328">Glycosyltransferase</keyword>
<keyword id="KW-1185">Reference proteome</keyword>
<keyword id="KW-0808">Transferase</keyword>
<gene>
    <name evidence="1" type="primary">deoA</name>
    <name type="ordered locus">EcE24377A_4981</name>
</gene>
<dbReference type="EC" id="2.4.2.4" evidence="1"/>
<dbReference type="EMBL" id="CP000800">
    <property type="protein sequence ID" value="ABV17407.1"/>
    <property type="molecule type" value="Genomic_DNA"/>
</dbReference>
<dbReference type="RefSeq" id="WP_000477811.1">
    <property type="nucleotide sequence ID" value="NC_009801.1"/>
</dbReference>
<dbReference type="SMR" id="A7ZVS5"/>
<dbReference type="GeneID" id="93777462"/>
<dbReference type="KEGG" id="ecw:EcE24377A_4981"/>
<dbReference type="HOGENOM" id="CLU_025040_0_1_6"/>
<dbReference type="UniPathway" id="UPA00578">
    <property type="reaction ID" value="UER00638"/>
</dbReference>
<dbReference type="Proteomes" id="UP000001122">
    <property type="component" value="Chromosome"/>
</dbReference>
<dbReference type="GO" id="GO:0005829">
    <property type="term" value="C:cytosol"/>
    <property type="evidence" value="ECO:0007669"/>
    <property type="project" value="TreeGrafter"/>
</dbReference>
<dbReference type="GO" id="GO:0004645">
    <property type="term" value="F:1,4-alpha-oligoglucan phosphorylase activity"/>
    <property type="evidence" value="ECO:0007669"/>
    <property type="project" value="InterPro"/>
</dbReference>
<dbReference type="GO" id="GO:0009032">
    <property type="term" value="F:thymidine phosphorylase activity"/>
    <property type="evidence" value="ECO:0007669"/>
    <property type="project" value="UniProtKB-UniRule"/>
</dbReference>
<dbReference type="GO" id="GO:0006206">
    <property type="term" value="P:pyrimidine nucleobase metabolic process"/>
    <property type="evidence" value="ECO:0007669"/>
    <property type="project" value="InterPro"/>
</dbReference>
<dbReference type="GO" id="GO:0046104">
    <property type="term" value="P:thymidine metabolic process"/>
    <property type="evidence" value="ECO:0007669"/>
    <property type="project" value="UniProtKB-UniRule"/>
</dbReference>
<dbReference type="FunFam" id="3.40.1030.10:FF:000001">
    <property type="entry name" value="Thymidine phosphorylase"/>
    <property type="match status" value="1"/>
</dbReference>
<dbReference type="FunFam" id="3.90.1170.30:FF:000001">
    <property type="entry name" value="Thymidine phosphorylase"/>
    <property type="match status" value="1"/>
</dbReference>
<dbReference type="Gene3D" id="3.40.1030.10">
    <property type="entry name" value="Nucleoside phosphorylase/phosphoribosyltransferase catalytic domain"/>
    <property type="match status" value="1"/>
</dbReference>
<dbReference type="Gene3D" id="3.90.1170.30">
    <property type="entry name" value="Pyrimidine nucleoside phosphorylase-like, C-terminal domain"/>
    <property type="match status" value="1"/>
</dbReference>
<dbReference type="Gene3D" id="1.20.970.10">
    <property type="entry name" value="Transferase, Pyrimidine Nucleoside Phosphorylase, Chain C"/>
    <property type="match status" value="1"/>
</dbReference>
<dbReference type="HAMAP" id="MF_01628">
    <property type="entry name" value="Thymid_phosp"/>
    <property type="match status" value="1"/>
</dbReference>
<dbReference type="InterPro" id="IPR000312">
    <property type="entry name" value="Glycosyl_Trfase_fam3"/>
</dbReference>
<dbReference type="InterPro" id="IPR017459">
    <property type="entry name" value="Glycosyl_Trfase_fam3_N_dom"/>
</dbReference>
<dbReference type="InterPro" id="IPR036320">
    <property type="entry name" value="Glycosyl_Trfase_fam3_N_dom_sf"/>
</dbReference>
<dbReference type="InterPro" id="IPR035902">
    <property type="entry name" value="Nuc_phospho_transferase"/>
</dbReference>
<dbReference type="InterPro" id="IPR036566">
    <property type="entry name" value="PYNP-like_C_sf"/>
</dbReference>
<dbReference type="InterPro" id="IPR013102">
    <property type="entry name" value="PYNP_C"/>
</dbReference>
<dbReference type="InterPro" id="IPR018090">
    <property type="entry name" value="Pyrmidine_PPas_bac/euk"/>
</dbReference>
<dbReference type="InterPro" id="IPR017872">
    <property type="entry name" value="Pyrmidine_PPase_CS"/>
</dbReference>
<dbReference type="InterPro" id="IPR000053">
    <property type="entry name" value="Thymidine/pyrmidine_PPase"/>
</dbReference>
<dbReference type="InterPro" id="IPR013465">
    <property type="entry name" value="Thymidine_Pase"/>
</dbReference>
<dbReference type="NCBIfam" id="NF004490">
    <property type="entry name" value="PRK05820.1"/>
    <property type="match status" value="1"/>
</dbReference>
<dbReference type="NCBIfam" id="TIGR02643">
    <property type="entry name" value="T_phosphoryl"/>
    <property type="match status" value="1"/>
</dbReference>
<dbReference type="NCBIfam" id="TIGR02644">
    <property type="entry name" value="Y_phosphoryl"/>
    <property type="match status" value="1"/>
</dbReference>
<dbReference type="PANTHER" id="PTHR10515">
    <property type="entry name" value="THYMIDINE PHOSPHORYLASE"/>
    <property type="match status" value="1"/>
</dbReference>
<dbReference type="PANTHER" id="PTHR10515:SF0">
    <property type="entry name" value="THYMIDINE PHOSPHORYLASE"/>
    <property type="match status" value="1"/>
</dbReference>
<dbReference type="Pfam" id="PF02885">
    <property type="entry name" value="Glycos_trans_3N"/>
    <property type="match status" value="1"/>
</dbReference>
<dbReference type="Pfam" id="PF00591">
    <property type="entry name" value="Glycos_transf_3"/>
    <property type="match status" value="1"/>
</dbReference>
<dbReference type="Pfam" id="PF07831">
    <property type="entry name" value="PYNP_C"/>
    <property type="match status" value="1"/>
</dbReference>
<dbReference type="PIRSF" id="PIRSF000478">
    <property type="entry name" value="TP_PyNP"/>
    <property type="match status" value="1"/>
</dbReference>
<dbReference type="SMART" id="SM00941">
    <property type="entry name" value="PYNP_C"/>
    <property type="match status" value="1"/>
</dbReference>
<dbReference type="SUPFAM" id="SSF52418">
    <property type="entry name" value="Nucleoside phosphorylase/phosphoribosyltransferase catalytic domain"/>
    <property type="match status" value="1"/>
</dbReference>
<dbReference type="SUPFAM" id="SSF47648">
    <property type="entry name" value="Nucleoside phosphorylase/phosphoribosyltransferase N-terminal domain"/>
    <property type="match status" value="1"/>
</dbReference>
<dbReference type="SUPFAM" id="SSF54680">
    <property type="entry name" value="Pyrimidine nucleoside phosphorylase C-terminal domain"/>
    <property type="match status" value="1"/>
</dbReference>
<dbReference type="PROSITE" id="PS00647">
    <property type="entry name" value="THYMID_PHOSPHORYLASE"/>
    <property type="match status" value="1"/>
</dbReference>
<sequence>MFLAQEIIRKKRDGHALSDEEIRFFINGIRDNTISEGQIAALAMTIFFHDMTMPERVSLTMAMRDSGTVLDWKSLHLNGPIVDKHSTGGVGDVTSLMLGPMVAACGGYIPMISGRGLGHTGGTLDKLESIPGFDIFPDDNRFREIIKDVGVAIIGQTSSLAPADKRFYATRDITATVDSIPLITASILAKKLAEGLDALVMDVKVGSGAFMPTYELSEALAEAIVGVANGAGVRTTALLTDMNQVLASSAGNAVEVREAVQFLTGEYRNPRLFDVTMALCVEMLISGKLAKDDAEARAKLQAVLDNGKAAEVFGRMVAAQKGPTDFVENYAKYLPTAMLTKAVYADTEGFVSEMDTRALGMAVVAMGGGRRQASDTIDYSVGFTDMARLGDQVDGQRPLAVIHAKDENSWQEAAKAVKAAIKLADKAPESTPTVYRRISE</sequence>
<reference key="1">
    <citation type="journal article" date="2008" name="J. Bacteriol.">
        <title>The pangenome structure of Escherichia coli: comparative genomic analysis of E. coli commensal and pathogenic isolates.</title>
        <authorList>
            <person name="Rasko D.A."/>
            <person name="Rosovitz M.J."/>
            <person name="Myers G.S.A."/>
            <person name="Mongodin E.F."/>
            <person name="Fricke W.F."/>
            <person name="Gajer P."/>
            <person name="Crabtree J."/>
            <person name="Sebaihia M."/>
            <person name="Thomson N.R."/>
            <person name="Chaudhuri R."/>
            <person name="Henderson I.R."/>
            <person name="Sperandio V."/>
            <person name="Ravel J."/>
        </authorList>
    </citation>
    <scope>NUCLEOTIDE SEQUENCE [LARGE SCALE GENOMIC DNA]</scope>
    <source>
        <strain>E24377A / ETEC</strain>
    </source>
</reference>